<protein>
    <recommendedName>
        <fullName evidence="1">Histidinol-phosphate aminotransferase</fullName>
        <ecNumber evidence="1">2.6.1.9</ecNumber>
    </recommendedName>
    <alternativeName>
        <fullName evidence="1">Imidazole acetol-phosphate transaminase</fullName>
    </alternativeName>
</protein>
<reference key="1">
    <citation type="journal article" date="2004" name="Environ. Microbiol.">
        <title>The genome of Desulfotalea psychrophila, a sulfate-reducing bacterium from permanently cold Arctic sediments.</title>
        <authorList>
            <person name="Rabus R."/>
            <person name="Ruepp A."/>
            <person name="Frickey T."/>
            <person name="Rattei T."/>
            <person name="Fartmann B."/>
            <person name="Stark M."/>
            <person name="Bauer M."/>
            <person name="Zibat A."/>
            <person name="Lombardot T."/>
            <person name="Becker I."/>
            <person name="Amann J."/>
            <person name="Gellner K."/>
            <person name="Teeling H."/>
            <person name="Leuschner W.D."/>
            <person name="Gloeckner F.-O."/>
            <person name="Lupas A.N."/>
            <person name="Amann R."/>
            <person name="Klenk H.-P."/>
        </authorList>
    </citation>
    <scope>NUCLEOTIDE SEQUENCE [LARGE SCALE GENOMIC DNA]</scope>
    <source>
        <strain>DSM 12343 / LSv54</strain>
    </source>
</reference>
<accession>Q6AQK2</accession>
<dbReference type="EC" id="2.6.1.9" evidence="1"/>
<dbReference type="EMBL" id="CR522870">
    <property type="protein sequence ID" value="CAG35371.1"/>
    <property type="molecule type" value="Genomic_DNA"/>
</dbReference>
<dbReference type="SMR" id="Q6AQK2"/>
<dbReference type="STRING" id="177439.DP0642"/>
<dbReference type="KEGG" id="dps:DP0642"/>
<dbReference type="eggNOG" id="COG0079">
    <property type="taxonomic scope" value="Bacteria"/>
</dbReference>
<dbReference type="HOGENOM" id="CLU_017584_3_3_7"/>
<dbReference type="OrthoDB" id="9813612at2"/>
<dbReference type="UniPathway" id="UPA00031">
    <property type="reaction ID" value="UER00012"/>
</dbReference>
<dbReference type="Proteomes" id="UP000000602">
    <property type="component" value="Chromosome"/>
</dbReference>
<dbReference type="GO" id="GO:0004400">
    <property type="term" value="F:histidinol-phosphate transaminase activity"/>
    <property type="evidence" value="ECO:0007669"/>
    <property type="project" value="UniProtKB-UniRule"/>
</dbReference>
<dbReference type="GO" id="GO:0030170">
    <property type="term" value="F:pyridoxal phosphate binding"/>
    <property type="evidence" value="ECO:0007669"/>
    <property type="project" value="InterPro"/>
</dbReference>
<dbReference type="GO" id="GO:0000105">
    <property type="term" value="P:L-histidine biosynthetic process"/>
    <property type="evidence" value="ECO:0007669"/>
    <property type="project" value="UniProtKB-UniRule"/>
</dbReference>
<dbReference type="CDD" id="cd00609">
    <property type="entry name" value="AAT_like"/>
    <property type="match status" value="1"/>
</dbReference>
<dbReference type="Gene3D" id="3.90.1150.10">
    <property type="entry name" value="Aspartate Aminotransferase, domain 1"/>
    <property type="match status" value="1"/>
</dbReference>
<dbReference type="Gene3D" id="3.40.640.10">
    <property type="entry name" value="Type I PLP-dependent aspartate aminotransferase-like (Major domain)"/>
    <property type="match status" value="1"/>
</dbReference>
<dbReference type="HAMAP" id="MF_01023">
    <property type="entry name" value="HisC_aminotrans_2"/>
    <property type="match status" value="1"/>
</dbReference>
<dbReference type="InterPro" id="IPR001917">
    <property type="entry name" value="Aminotrans_II_pyridoxalP_BS"/>
</dbReference>
<dbReference type="InterPro" id="IPR004839">
    <property type="entry name" value="Aminotransferase_I/II_large"/>
</dbReference>
<dbReference type="InterPro" id="IPR005861">
    <property type="entry name" value="HisP_aminotrans"/>
</dbReference>
<dbReference type="InterPro" id="IPR050106">
    <property type="entry name" value="HistidinolP_aminotransfase"/>
</dbReference>
<dbReference type="InterPro" id="IPR015424">
    <property type="entry name" value="PyrdxlP-dep_Trfase"/>
</dbReference>
<dbReference type="InterPro" id="IPR015421">
    <property type="entry name" value="PyrdxlP-dep_Trfase_major"/>
</dbReference>
<dbReference type="InterPro" id="IPR015422">
    <property type="entry name" value="PyrdxlP-dep_Trfase_small"/>
</dbReference>
<dbReference type="NCBIfam" id="TIGR01141">
    <property type="entry name" value="hisC"/>
    <property type="match status" value="1"/>
</dbReference>
<dbReference type="PANTHER" id="PTHR43643:SF3">
    <property type="entry name" value="HISTIDINOL-PHOSPHATE AMINOTRANSFERASE"/>
    <property type="match status" value="1"/>
</dbReference>
<dbReference type="PANTHER" id="PTHR43643">
    <property type="entry name" value="HISTIDINOL-PHOSPHATE AMINOTRANSFERASE 2"/>
    <property type="match status" value="1"/>
</dbReference>
<dbReference type="Pfam" id="PF00155">
    <property type="entry name" value="Aminotran_1_2"/>
    <property type="match status" value="1"/>
</dbReference>
<dbReference type="SUPFAM" id="SSF53383">
    <property type="entry name" value="PLP-dependent transferases"/>
    <property type="match status" value="1"/>
</dbReference>
<dbReference type="PROSITE" id="PS00599">
    <property type="entry name" value="AA_TRANSFER_CLASS_2"/>
    <property type="match status" value="1"/>
</dbReference>
<feature type="chain" id="PRO_0000153357" description="Histidinol-phosphate aminotransferase">
    <location>
        <begin position="1"/>
        <end position="379"/>
    </location>
</feature>
<feature type="modified residue" description="N6-(pyridoxal phosphate)lysine" evidence="1">
    <location>
        <position position="236"/>
    </location>
</feature>
<organism>
    <name type="scientific">Desulfotalea psychrophila (strain LSv54 / DSM 12343)</name>
    <dbReference type="NCBI Taxonomy" id="177439"/>
    <lineage>
        <taxon>Bacteria</taxon>
        <taxon>Pseudomonadati</taxon>
        <taxon>Thermodesulfobacteriota</taxon>
        <taxon>Desulfobulbia</taxon>
        <taxon>Desulfobulbales</taxon>
        <taxon>Desulfocapsaceae</taxon>
        <taxon>Desulfotalea</taxon>
    </lineage>
</organism>
<proteinExistence type="inferred from homology"/>
<evidence type="ECO:0000255" key="1">
    <source>
        <dbReference type="HAMAP-Rule" id="MF_01023"/>
    </source>
</evidence>
<comment type="catalytic activity">
    <reaction evidence="1">
        <text>L-histidinol phosphate + 2-oxoglutarate = 3-(imidazol-4-yl)-2-oxopropyl phosphate + L-glutamate</text>
        <dbReference type="Rhea" id="RHEA:23744"/>
        <dbReference type="ChEBI" id="CHEBI:16810"/>
        <dbReference type="ChEBI" id="CHEBI:29985"/>
        <dbReference type="ChEBI" id="CHEBI:57766"/>
        <dbReference type="ChEBI" id="CHEBI:57980"/>
        <dbReference type="EC" id="2.6.1.9"/>
    </reaction>
</comment>
<comment type="cofactor">
    <cofactor evidence="1">
        <name>pyridoxal 5'-phosphate</name>
        <dbReference type="ChEBI" id="CHEBI:597326"/>
    </cofactor>
</comment>
<comment type="pathway">
    <text evidence="1">Amino-acid biosynthesis; L-histidine biosynthesis; L-histidine from 5-phospho-alpha-D-ribose 1-diphosphate: step 7/9.</text>
</comment>
<comment type="subunit">
    <text evidence="1">Homodimer.</text>
</comment>
<comment type="similarity">
    <text evidence="1">Belongs to the class-II pyridoxal-phosphate-dependent aminotransferase family. Histidinol-phosphate aminotransferase subfamily.</text>
</comment>
<name>HIS8_DESPS</name>
<sequence length="379" mass="42532">MPLFQKEIALKLDIPENIENIKPYPPGKPLDELEREYGITDSIKLASNENPWGASPKAIKAIGESLGDMQRYPDGSAYYLTEAIAKYAGVGMSEIILGNGSNEVIEFLVKAFVQDDSEVITSHPSFLMYQKFVQVRGGVNRVIPLKDMHHDLQTILDTVNEKTRLIFIDNPNNPTGTYLEPELLIDFINSLPEHVILVLDEAYVDFMDLDKWLDVPSLIKNQAGRCGIVSLRTFSKAYGLSGLRVGFGLMAEEIVTCLHKVRQPFNVNSLAQVGALAALGDVDFYEQTLLKNRQGMKWLMKEIKGLGCEPFASQTNFFLIDVQGNADKLYTEMLYKGVIIRSMSAYGYPHYIRVTVGTTVENKRFLKALSDCLKELNYV</sequence>
<gene>
    <name evidence="1" type="primary">hisC</name>
    <name type="ordered locus">DP0642</name>
</gene>
<keyword id="KW-0028">Amino-acid biosynthesis</keyword>
<keyword id="KW-0032">Aminotransferase</keyword>
<keyword id="KW-0368">Histidine biosynthesis</keyword>
<keyword id="KW-0663">Pyridoxal phosphate</keyword>
<keyword id="KW-1185">Reference proteome</keyword>
<keyword id="KW-0808">Transferase</keyword>